<organism>
    <name type="scientific">Francisella tularensis subsp. tularensis (strain SCHU S4 / Schu 4)</name>
    <dbReference type="NCBI Taxonomy" id="177416"/>
    <lineage>
        <taxon>Bacteria</taxon>
        <taxon>Pseudomonadati</taxon>
        <taxon>Pseudomonadota</taxon>
        <taxon>Gammaproteobacteria</taxon>
        <taxon>Thiotrichales</taxon>
        <taxon>Francisellaceae</taxon>
        <taxon>Francisella</taxon>
    </lineage>
</organism>
<proteinExistence type="inferred from homology"/>
<keyword id="KW-0963">Cytoplasm</keyword>
<keyword id="KW-0489">Methyltransferase</keyword>
<keyword id="KW-1185">Reference proteome</keyword>
<keyword id="KW-0949">S-adenosyl-L-methionine</keyword>
<keyword id="KW-0808">Transferase</keyword>
<dbReference type="EC" id="2.1.1.67" evidence="1"/>
<dbReference type="EMBL" id="AJ749949">
    <property type="protein sequence ID" value="CAG46294.1"/>
    <property type="molecule type" value="Genomic_DNA"/>
</dbReference>
<dbReference type="RefSeq" id="WP_003022610.1">
    <property type="nucleotide sequence ID" value="NC_006570.2"/>
</dbReference>
<dbReference type="RefSeq" id="YP_170569.1">
    <property type="nucleotide sequence ID" value="NC_006570.2"/>
</dbReference>
<dbReference type="SMR" id="Q5NEH3"/>
<dbReference type="STRING" id="177416.FTT_1661"/>
<dbReference type="DNASU" id="3190790"/>
<dbReference type="EnsemblBacteria" id="CAG46294">
    <property type="protein sequence ID" value="CAG46294"/>
    <property type="gene ID" value="FTT_1661"/>
</dbReference>
<dbReference type="KEGG" id="ftu:FTT_1661"/>
<dbReference type="eggNOG" id="COG0500">
    <property type="taxonomic scope" value="Bacteria"/>
</dbReference>
<dbReference type="OrthoDB" id="9778208at2"/>
<dbReference type="Proteomes" id="UP000001174">
    <property type="component" value="Chromosome"/>
</dbReference>
<dbReference type="GO" id="GO:0005737">
    <property type="term" value="C:cytoplasm"/>
    <property type="evidence" value="ECO:0007669"/>
    <property type="project" value="UniProtKB-SubCell"/>
</dbReference>
<dbReference type="GO" id="GO:0008119">
    <property type="term" value="F:thiopurine S-methyltransferase activity"/>
    <property type="evidence" value="ECO:0007669"/>
    <property type="project" value="UniProtKB-UniRule"/>
</dbReference>
<dbReference type="GO" id="GO:0032259">
    <property type="term" value="P:methylation"/>
    <property type="evidence" value="ECO:0007669"/>
    <property type="project" value="UniProtKB-KW"/>
</dbReference>
<dbReference type="FunFam" id="3.40.50.150:FF:000101">
    <property type="entry name" value="Thiopurine S-methyltransferase"/>
    <property type="match status" value="1"/>
</dbReference>
<dbReference type="Gene3D" id="3.40.50.150">
    <property type="entry name" value="Vaccinia Virus protein VP39"/>
    <property type="match status" value="1"/>
</dbReference>
<dbReference type="HAMAP" id="MF_00812">
    <property type="entry name" value="Thiopur_methtran"/>
    <property type="match status" value="1"/>
</dbReference>
<dbReference type="InterPro" id="IPR029063">
    <property type="entry name" value="SAM-dependent_MTases_sf"/>
</dbReference>
<dbReference type="InterPro" id="IPR025835">
    <property type="entry name" value="Thiopurine_S-MeTrfase"/>
</dbReference>
<dbReference type="InterPro" id="IPR008854">
    <property type="entry name" value="TPMT"/>
</dbReference>
<dbReference type="NCBIfam" id="NF009733">
    <property type="entry name" value="PRK13256.1"/>
    <property type="match status" value="1"/>
</dbReference>
<dbReference type="PANTHER" id="PTHR10259">
    <property type="entry name" value="THIOPURINE S-METHYLTRANSFERASE"/>
    <property type="match status" value="1"/>
</dbReference>
<dbReference type="PANTHER" id="PTHR10259:SF11">
    <property type="entry name" value="THIOPURINE S-METHYLTRANSFERASE"/>
    <property type="match status" value="1"/>
</dbReference>
<dbReference type="Pfam" id="PF05724">
    <property type="entry name" value="TPMT"/>
    <property type="match status" value="1"/>
</dbReference>
<dbReference type="PIRSF" id="PIRSF023956">
    <property type="entry name" value="Thiopurine_S-methyltransferase"/>
    <property type="match status" value="1"/>
</dbReference>
<dbReference type="SUPFAM" id="SSF53335">
    <property type="entry name" value="S-adenosyl-L-methionine-dependent methyltransferases"/>
    <property type="match status" value="1"/>
</dbReference>
<dbReference type="PROSITE" id="PS51585">
    <property type="entry name" value="SAM_MT_TPMT"/>
    <property type="match status" value="1"/>
</dbReference>
<gene>
    <name evidence="1" type="primary">tpm</name>
    <name type="ordered locus">FTT_1661</name>
</gene>
<feature type="chain" id="PRO_0000220119" description="Thiopurine S-methyltransferase">
    <location>
        <begin position="1"/>
        <end position="226"/>
    </location>
</feature>
<feature type="binding site" evidence="1">
    <location>
        <position position="16"/>
    </location>
    <ligand>
        <name>S-adenosyl-L-methionine</name>
        <dbReference type="ChEBI" id="CHEBI:59789"/>
    </ligand>
</feature>
<feature type="binding site" evidence="1">
    <location>
        <position position="51"/>
    </location>
    <ligand>
        <name>S-adenosyl-L-methionine</name>
        <dbReference type="ChEBI" id="CHEBI:59789"/>
    </ligand>
</feature>
<feature type="binding site" evidence="1">
    <location>
        <position position="72"/>
    </location>
    <ligand>
        <name>S-adenosyl-L-methionine</name>
        <dbReference type="ChEBI" id="CHEBI:59789"/>
    </ligand>
</feature>
<feature type="binding site" evidence="1">
    <location>
        <position position="131"/>
    </location>
    <ligand>
        <name>S-adenosyl-L-methionine</name>
        <dbReference type="ChEBI" id="CHEBI:59789"/>
    </ligand>
</feature>
<comment type="catalytic activity">
    <reaction evidence="1">
        <text>S-adenosyl-L-methionine + a thiopurine = S-adenosyl-L-homocysteine + a thiopurine S-methylether.</text>
        <dbReference type="EC" id="2.1.1.67"/>
    </reaction>
</comment>
<comment type="subcellular location">
    <subcellularLocation>
        <location evidence="1">Cytoplasm</location>
    </subcellularLocation>
</comment>
<comment type="similarity">
    <text evidence="1">Belongs to the class I-like SAM-binding methyltransferase superfamily. TPMT family.</text>
</comment>
<name>TPMT_FRATT</name>
<evidence type="ECO:0000255" key="1">
    <source>
        <dbReference type="HAMAP-Rule" id="MF_00812"/>
    </source>
</evidence>
<reference key="1">
    <citation type="journal article" date="2005" name="Nat. Genet.">
        <title>The complete genome sequence of Francisella tularensis, the causative agent of tularemia.</title>
        <authorList>
            <person name="Larsson P."/>
            <person name="Oyston P.C.F."/>
            <person name="Chain P."/>
            <person name="Chu M.C."/>
            <person name="Duffield M."/>
            <person name="Fuxelius H.-H."/>
            <person name="Garcia E."/>
            <person name="Haelltorp G."/>
            <person name="Johansson D."/>
            <person name="Isherwood K.E."/>
            <person name="Karp P.D."/>
            <person name="Larsson E."/>
            <person name="Liu Y."/>
            <person name="Michell S."/>
            <person name="Prior J."/>
            <person name="Prior R."/>
            <person name="Malfatti S."/>
            <person name="Sjoestedt A."/>
            <person name="Svensson K."/>
            <person name="Thompson N."/>
            <person name="Vergez L."/>
            <person name="Wagg J.K."/>
            <person name="Wren B.W."/>
            <person name="Lindler L.E."/>
            <person name="Andersson S.G.E."/>
            <person name="Forsman M."/>
            <person name="Titball R.W."/>
        </authorList>
    </citation>
    <scope>NUCLEOTIDE SEQUENCE [LARGE SCALE GENOMIC DNA]</scope>
    <source>
        <strain>SCHU S4 / Schu 4</strain>
    </source>
</reference>
<protein>
    <recommendedName>
        <fullName evidence="1">Thiopurine S-methyltransferase</fullName>
        <ecNumber evidence="1">2.1.1.67</ecNumber>
    </recommendedName>
    <alternativeName>
        <fullName evidence="1">Thiopurine methyltransferase</fullName>
    </alternativeName>
</protein>
<sequence>MNKLETNNNQYWLDRWQNDDVGFCQESPNEFLVKHFSKLNINDSSVCLIPMCGCSIDMLFFLSKGVKVIGIELSEKAVLSFFSQNTINYEVIHGNDYKLYKGDDIEIYVADIFNLPKIANNLPVFDIWYDRGAYIALPNDLRTNYAKMMLEVCSNNTQILLLVMEHDKKSQTPPYSVTQAELIKNFSAKIKFELIDSKQRDNIPDYRKAEGMTEQYYTTYLRKKQY</sequence>
<accession>Q5NEH3</accession>